<sequence>MDPGPAGDEVSLAPQQETAEQDVETTLRPRRLSEFVGQARVREQLELVLHGALNRGDQPDHVLFSGPPGLGKTSLAMIIAAELGASIRVTSGPALERPGDLAAMLSNLAEGDVLFIDEIHRIARPAEEMLYLAMEDYRVDIVVGKGPGATSIPLEIAPFTLVGATTRSGALTGPLRDRFGFTAHMEFYEPAELELVVRRSAGILGVDLRDEGAVEIARRSRGTPRIANRLLRRVRDFAEVRADGAVTLDVARAALEVYDVDEHGLDRLDRAVLGALVRSFNGGPVGVSTLAVAVGEEPTTVEEVCEPYLVRAGMLARTPRGRVATVAAWQHLGLVPPQHAPGEATRSLFADEV</sequence>
<feature type="chain" id="PRO_0000322839" description="Holliday junction branch migration complex subunit RuvB">
    <location>
        <begin position="1"/>
        <end position="353"/>
    </location>
</feature>
<feature type="region of interest" description="Large ATPase domain (RuvB-L)" evidence="1">
    <location>
        <begin position="1"/>
        <end position="188"/>
    </location>
</feature>
<feature type="region of interest" description="Disordered" evidence="2">
    <location>
        <begin position="1"/>
        <end position="25"/>
    </location>
</feature>
<feature type="region of interest" description="Small ATPAse domain (RuvB-S)" evidence="1">
    <location>
        <begin position="189"/>
        <end position="259"/>
    </location>
</feature>
<feature type="region of interest" description="Head domain (RuvB-H)" evidence="1">
    <location>
        <begin position="262"/>
        <end position="353"/>
    </location>
</feature>
<feature type="binding site" evidence="1">
    <location>
        <position position="27"/>
    </location>
    <ligand>
        <name>ATP</name>
        <dbReference type="ChEBI" id="CHEBI:30616"/>
    </ligand>
</feature>
<feature type="binding site" evidence="1">
    <location>
        <position position="28"/>
    </location>
    <ligand>
        <name>ATP</name>
        <dbReference type="ChEBI" id="CHEBI:30616"/>
    </ligand>
</feature>
<feature type="binding site" evidence="1">
    <location>
        <position position="69"/>
    </location>
    <ligand>
        <name>ATP</name>
        <dbReference type="ChEBI" id="CHEBI:30616"/>
    </ligand>
</feature>
<feature type="binding site" evidence="1">
    <location>
        <position position="72"/>
    </location>
    <ligand>
        <name>ATP</name>
        <dbReference type="ChEBI" id="CHEBI:30616"/>
    </ligand>
</feature>
<feature type="binding site" evidence="1">
    <location>
        <position position="73"/>
    </location>
    <ligand>
        <name>ATP</name>
        <dbReference type="ChEBI" id="CHEBI:30616"/>
    </ligand>
</feature>
<feature type="binding site" evidence="1">
    <location>
        <position position="73"/>
    </location>
    <ligand>
        <name>Mg(2+)</name>
        <dbReference type="ChEBI" id="CHEBI:18420"/>
    </ligand>
</feature>
<feature type="binding site" evidence="1">
    <location>
        <position position="74"/>
    </location>
    <ligand>
        <name>ATP</name>
        <dbReference type="ChEBI" id="CHEBI:30616"/>
    </ligand>
</feature>
<feature type="binding site" evidence="1">
    <location>
        <begin position="135"/>
        <end position="137"/>
    </location>
    <ligand>
        <name>ATP</name>
        <dbReference type="ChEBI" id="CHEBI:30616"/>
    </ligand>
</feature>
<feature type="binding site" evidence="1">
    <location>
        <position position="178"/>
    </location>
    <ligand>
        <name>ATP</name>
        <dbReference type="ChEBI" id="CHEBI:30616"/>
    </ligand>
</feature>
<feature type="binding site" evidence="1">
    <location>
        <position position="188"/>
    </location>
    <ligand>
        <name>ATP</name>
        <dbReference type="ChEBI" id="CHEBI:30616"/>
    </ligand>
</feature>
<feature type="binding site" evidence="1">
    <location>
        <position position="225"/>
    </location>
    <ligand>
        <name>ATP</name>
        <dbReference type="ChEBI" id="CHEBI:30616"/>
    </ligand>
</feature>
<feature type="binding site" evidence="1">
    <location>
        <position position="317"/>
    </location>
    <ligand>
        <name>DNA</name>
        <dbReference type="ChEBI" id="CHEBI:16991"/>
    </ligand>
</feature>
<feature type="binding site" evidence="1">
    <location>
        <position position="322"/>
    </location>
    <ligand>
        <name>DNA</name>
        <dbReference type="ChEBI" id="CHEBI:16991"/>
    </ligand>
</feature>
<dbReference type="EC" id="3.6.4.-" evidence="1"/>
<dbReference type="EMBL" id="AM420293">
    <property type="protein sequence ID" value="CAM01333.1"/>
    <property type="molecule type" value="Genomic_DNA"/>
</dbReference>
<dbReference type="SMR" id="A4FBA8"/>
<dbReference type="STRING" id="405948.SACE_2023"/>
<dbReference type="KEGG" id="sen:SACE_2023"/>
<dbReference type="eggNOG" id="COG2255">
    <property type="taxonomic scope" value="Bacteria"/>
</dbReference>
<dbReference type="HOGENOM" id="CLU_055599_1_0_11"/>
<dbReference type="Proteomes" id="UP000006728">
    <property type="component" value="Chromosome"/>
</dbReference>
<dbReference type="GO" id="GO:0005737">
    <property type="term" value="C:cytoplasm"/>
    <property type="evidence" value="ECO:0007669"/>
    <property type="project" value="UniProtKB-SubCell"/>
</dbReference>
<dbReference type="GO" id="GO:0048476">
    <property type="term" value="C:Holliday junction resolvase complex"/>
    <property type="evidence" value="ECO:0007669"/>
    <property type="project" value="UniProtKB-UniRule"/>
</dbReference>
<dbReference type="GO" id="GO:0005524">
    <property type="term" value="F:ATP binding"/>
    <property type="evidence" value="ECO:0007669"/>
    <property type="project" value="UniProtKB-UniRule"/>
</dbReference>
<dbReference type="GO" id="GO:0016887">
    <property type="term" value="F:ATP hydrolysis activity"/>
    <property type="evidence" value="ECO:0007669"/>
    <property type="project" value="InterPro"/>
</dbReference>
<dbReference type="GO" id="GO:0000400">
    <property type="term" value="F:four-way junction DNA binding"/>
    <property type="evidence" value="ECO:0007669"/>
    <property type="project" value="UniProtKB-UniRule"/>
</dbReference>
<dbReference type="GO" id="GO:0009378">
    <property type="term" value="F:four-way junction helicase activity"/>
    <property type="evidence" value="ECO:0007669"/>
    <property type="project" value="InterPro"/>
</dbReference>
<dbReference type="GO" id="GO:0006310">
    <property type="term" value="P:DNA recombination"/>
    <property type="evidence" value="ECO:0007669"/>
    <property type="project" value="UniProtKB-UniRule"/>
</dbReference>
<dbReference type="GO" id="GO:0006281">
    <property type="term" value="P:DNA repair"/>
    <property type="evidence" value="ECO:0007669"/>
    <property type="project" value="UniProtKB-UniRule"/>
</dbReference>
<dbReference type="CDD" id="cd00009">
    <property type="entry name" value="AAA"/>
    <property type="match status" value="1"/>
</dbReference>
<dbReference type="Gene3D" id="1.10.8.60">
    <property type="match status" value="1"/>
</dbReference>
<dbReference type="Gene3D" id="3.40.50.300">
    <property type="entry name" value="P-loop containing nucleotide triphosphate hydrolases"/>
    <property type="match status" value="1"/>
</dbReference>
<dbReference type="Gene3D" id="1.10.10.10">
    <property type="entry name" value="Winged helix-like DNA-binding domain superfamily/Winged helix DNA-binding domain"/>
    <property type="match status" value="1"/>
</dbReference>
<dbReference type="HAMAP" id="MF_00016">
    <property type="entry name" value="DNA_HJ_migration_RuvB"/>
    <property type="match status" value="1"/>
</dbReference>
<dbReference type="InterPro" id="IPR003593">
    <property type="entry name" value="AAA+_ATPase"/>
</dbReference>
<dbReference type="InterPro" id="IPR041445">
    <property type="entry name" value="AAA_lid_4"/>
</dbReference>
<dbReference type="InterPro" id="IPR004605">
    <property type="entry name" value="DNA_helicase_Holl-junc_RuvB"/>
</dbReference>
<dbReference type="InterPro" id="IPR027417">
    <property type="entry name" value="P-loop_NTPase"/>
</dbReference>
<dbReference type="InterPro" id="IPR008824">
    <property type="entry name" value="RuvB-like_N"/>
</dbReference>
<dbReference type="InterPro" id="IPR008823">
    <property type="entry name" value="RuvB_C"/>
</dbReference>
<dbReference type="InterPro" id="IPR036388">
    <property type="entry name" value="WH-like_DNA-bd_sf"/>
</dbReference>
<dbReference type="InterPro" id="IPR036390">
    <property type="entry name" value="WH_DNA-bd_sf"/>
</dbReference>
<dbReference type="NCBIfam" id="NF000868">
    <property type="entry name" value="PRK00080.1"/>
    <property type="match status" value="1"/>
</dbReference>
<dbReference type="NCBIfam" id="TIGR00635">
    <property type="entry name" value="ruvB"/>
    <property type="match status" value="1"/>
</dbReference>
<dbReference type="PANTHER" id="PTHR42848">
    <property type="match status" value="1"/>
</dbReference>
<dbReference type="PANTHER" id="PTHR42848:SF1">
    <property type="entry name" value="HOLLIDAY JUNCTION BRANCH MIGRATION COMPLEX SUBUNIT RUVB"/>
    <property type="match status" value="1"/>
</dbReference>
<dbReference type="Pfam" id="PF17864">
    <property type="entry name" value="AAA_lid_4"/>
    <property type="match status" value="1"/>
</dbReference>
<dbReference type="Pfam" id="PF05491">
    <property type="entry name" value="RuvB_C"/>
    <property type="match status" value="1"/>
</dbReference>
<dbReference type="Pfam" id="PF05496">
    <property type="entry name" value="RuvB_N"/>
    <property type="match status" value="1"/>
</dbReference>
<dbReference type="SMART" id="SM00382">
    <property type="entry name" value="AAA"/>
    <property type="match status" value="1"/>
</dbReference>
<dbReference type="SUPFAM" id="SSF52540">
    <property type="entry name" value="P-loop containing nucleoside triphosphate hydrolases"/>
    <property type="match status" value="1"/>
</dbReference>
<dbReference type="SUPFAM" id="SSF46785">
    <property type="entry name" value="Winged helix' DNA-binding domain"/>
    <property type="match status" value="1"/>
</dbReference>
<name>RUVB_SACEN</name>
<keyword id="KW-0067">ATP-binding</keyword>
<keyword id="KW-0963">Cytoplasm</keyword>
<keyword id="KW-0227">DNA damage</keyword>
<keyword id="KW-0233">DNA recombination</keyword>
<keyword id="KW-0234">DNA repair</keyword>
<keyword id="KW-0238">DNA-binding</keyword>
<keyword id="KW-0378">Hydrolase</keyword>
<keyword id="KW-0547">Nucleotide-binding</keyword>
<keyword id="KW-1185">Reference proteome</keyword>
<comment type="function">
    <text evidence="1">The RuvA-RuvB-RuvC complex processes Holliday junction (HJ) DNA during genetic recombination and DNA repair, while the RuvA-RuvB complex plays an important role in the rescue of blocked DNA replication forks via replication fork reversal (RFR). RuvA specifically binds to HJ cruciform DNA, conferring on it an open structure. The RuvB hexamer acts as an ATP-dependent pump, pulling dsDNA into and through the RuvAB complex. RuvB forms 2 homohexamers on either side of HJ DNA bound by 1 or 2 RuvA tetramers; 4 subunits per hexamer contact DNA at a time. Coordinated motions by a converter formed by DNA-disengaged RuvB subunits stimulates ATP hydrolysis and nucleotide exchange. Immobilization of the converter enables RuvB to convert the ATP-contained energy into a lever motion, pulling 2 nucleotides of DNA out of the RuvA tetramer per ATP hydrolyzed, thus driving DNA branch migration. The RuvB motors rotate together with the DNA substrate, which together with the progressing nucleotide cycle form the mechanistic basis for DNA recombination by continuous HJ branch migration. Branch migration allows RuvC to scan DNA until it finds its consensus sequence, where it cleaves and resolves cruciform DNA.</text>
</comment>
<comment type="catalytic activity">
    <reaction evidence="1">
        <text>ATP + H2O = ADP + phosphate + H(+)</text>
        <dbReference type="Rhea" id="RHEA:13065"/>
        <dbReference type="ChEBI" id="CHEBI:15377"/>
        <dbReference type="ChEBI" id="CHEBI:15378"/>
        <dbReference type="ChEBI" id="CHEBI:30616"/>
        <dbReference type="ChEBI" id="CHEBI:43474"/>
        <dbReference type="ChEBI" id="CHEBI:456216"/>
    </reaction>
</comment>
<comment type="subunit">
    <text evidence="1">Homohexamer. Forms an RuvA(8)-RuvB(12)-Holliday junction (HJ) complex. HJ DNA is sandwiched between 2 RuvA tetramers; dsDNA enters through RuvA and exits via RuvB. An RuvB hexamer assembles on each DNA strand where it exits the tetramer. Each RuvB hexamer is contacted by two RuvA subunits (via domain III) on 2 adjacent RuvB subunits; this complex drives branch migration. In the full resolvosome a probable DNA-RuvA(4)-RuvB(12)-RuvC(2) complex forms which resolves the HJ.</text>
</comment>
<comment type="subcellular location">
    <subcellularLocation>
        <location evidence="1">Cytoplasm</location>
    </subcellularLocation>
</comment>
<comment type="domain">
    <text evidence="1">Has 3 domains, the large (RuvB-L) and small ATPase (RuvB-S) domains and the C-terminal head (RuvB-H) domain. The head domain binds DNA, while the ATPase domains jointly bind ATP, ADP or are empty depending on the state of the subunit in the translocation cycle. During a single DNA translocation step the structure of each domain remains the same, but their relative positions change.</text>
</comment>
<comment type="similarity">
    <text evidence="1">Belongs to the RuvB family.</text>
</comment>
<gene>
    <name evidence="1" type="primary">ruvB</name>
    <name type="ordered locus">SACE_2023</name>
</gene>
<evidence type="ECO:0000255" key="1">
    <source>
        <dbReference type="HAMAP-Rule" id="MF_00016"/>
    </source>
</evidence>
<evidence type="ECO:0000256" key="2">
    <source>
        <dbReference type="SAM" id="MobiDB-lite"/>
    </source>
</evidence>
<reference key="1">
    <citation type="journal article" date="2007" name="Nat. Biotechnol.">
        <title>Complete genome sequence of the erythromycin-producing bacterium Saccharopolyspora erythraea NRRL23338.</title>
        <authorList>
            <person name="Oliynyk M."/>
            <person name="Samborskyy M."/>
            <person name="Lester J.B."/>
            <person name="Mironenko T."/>
            <person name="Scott N."/>
            <person name="Dickens S."/>
            <person name="Haydock S.F."/>
            <person name="Leadlay P.F."/>
        </authorList>
    </citation>
    <scope>NUCLEOTIDE SEQUENCE [LARGE SCALE GENOMIC DNA]</scope>
    <source>
        <strain>ATCC 11635 / DSM 40517 / JCM 4748 / NBRC 13426 / NCIMB 8594 / NRRL 2338</strain>
    </source>
</reference>
<accession>A4FBA8</accession>
<protein>
    <recommendedName>
        <fullName evidence="1">Holliday junction branch migration complex subunit RuvB</fullName>
        <ecNumber evidence="1">3.6.4.-</ecNumber>
    </recommendedName>
</protein>
<organism>
    <name type="scientific">Saccharopolyspora erythraea (strain ATCC 11635 / DSM 40517 / JCM 4748 / NBRC 13426 / NCIMB 8594 / NRRL 2338)</name>
    <dbReference type="NCBI Taxonomy" id="405948"/>
    <lineage>
        <taxon>Bacteria</taxon>
        <taxon>Bacillati</taxon>
        <taxon>Actinomycetota</taxon>
        <taxon>Actinomycetes</taxon>
        <taxon>Pseudonocardiales</taxon>
        <taxon>Pseudonocardiaceae</taxon>
        <taxon>Saccharopolyspora</taxon>
    </lineage>
</organism>
<proteinExistence type="inferred from homology"/>